<protein>
    <recommendedName>
        <fullName evidence="1">Large ribosomal subunit protein bL20</fullName>
    </recommendedName>
    <alternativeName>
        <fullName evidence="2">50S ribosomal protein L20</fullName>
    </alternativeName>
</protein>
<name>RL20_FRATO</name>
<keyword id="KW-0687">Ribonucleoprotein</keyword>
<keyword id="KW-0689">Ribosomal protein</keyword>
<keyword id="KW-0694">RNA-binding</keyword>
<keyword id="KW-0699">rRNA-binding</keyword>
<reference key="1">
    <citation type="journal article" date="2006" name="J. Bacteriol.">
        <title>Chromosome rearrangement and diversification of Francisella tularensis revealed by the type B (OSU18) genome sequence.</title>
        <authorList>
            <person name="Petrosino J.F."/>
            <person name="Xiang Q."/>
            <person name="Karpathy S.E."/>
            <person name="Jiang H."/>
            <person name="Yerrapragada S."/>
            <person name="Liu Y."/>
            <person name="Gioia J."/>
            <person name="Hemphill L."/>
            <person name="Gonzalez A."/>
            <person name="Raghavan T.M."/>
            <person name="Uzman A."/>
            <person name="Fox G.E."/>
            <person name="Highlander S."/>
            <person name="Reichard M."/>
            <person name="Morton R.J."/>
            <person name="Clinkenbeard K.D."/>
            <person name="Weinstock G.M."/>
        </authorList>
    </citation>
    <scope>NUCLEOTIDE SEQUENCE [LARGE SCALE GENOMIC DNA]</scope>
    <source>
        <strain>OSU18</strain>
    </source>
</reference>
<gene>
    <name evidence="1" type="primary">rplT</name>
    <name type="ordered locus">FTH_1366</name>
</gene>
<proteinExistence type="inferred from homology"/>
<organism>
    <name type="scientific">Francisella tularensis subsp. holarctica (strain OSU18)</name>
    <dbReference type="NCBI Taxonomy" id="393011"/>
    <lineage>
        <taxon>Bacteria</taxon>
        <taxon>Pseudomonadati</taxon>
        <taxon>Pseudomonadota</taxon>
        <taxon>Gammaproteobacteria</taxon>
        <taxon>Thiotrichales</taxon>
        <taxon>Francisellaceae</taxon>
        <taxon>Francisella</taxon>
    </lineage>
</organism>
<sequence length="118" mass="13349">MSRVKRGVTARARHKKVLNQAKGYYGARSRVYRVAKQAVIKAGQYAYRDRKVKKRTFRSLWIVRINAAARQHDISYSQLINGLNKADVELDRKALAELAVYNKDAFAAVVEKAKAALA</sequence>
<dbReference type="EMBL" id="CP000437">
    <property type="protein sequence ID" value="ABI83190.1"/>
    <property type="molecule type" value="Genomic_DNA"/>
</dbReference>
<dbReference type="RefSeq" id="WP_003016668.1">
    <property type="nucleotide sequence ID" value="NC_017463.1"/>
</dbReference>
<dbReference type="SMR" id="Q0BL44"/>
<dbReference type="KEGG" id="fth:FTH_1366"/>
<dbReference type="GO" id="GO:1990904">
    <property type="term" value="C:ribonucleoprotein complex"/>
    <property type="evidence" value="ECO:0007669"/>
    <property type="project" value="UniProtKB-KW"/>
</dbReference>
<dbReference type="GO" id="GO:0005840">
    <property type="term" value="C:ribosome"/>
    <property type="evidence" value="ECO:0007669"/>
    <property type="project" value="UniProtKB-KW"/>
</dbReference>
<dbReference type="GO" id="GO:0019843">
    <property type="term" value="F:rRNA binding"/>
    <property type="evidence" value="ECO:0007669"/>
    <property type="project" value="UniProtKB-UniRule"/>
</dbReference>
<dbReference type="GO" id="GO:0003735">
    <property type="term" value="F:structural constituent of ribosome"/>
    <property type="evidence" value="ECO:0007669"/>
    <property type="project" value="InterPro"/>
</dbReference>
<dbReference type="GO" id="GO:0000027">
    <property type="term" value="P:ribosomal large subunit assembly"/>
    <property type="evidence" value="ECO:0007669"/>
    <property type="project" value="UniProtKB-UniRule"/>
</dbReference>
<dbReference type="GO" id="GO:0006412">
    <property type="term" value="P:translation"/>
    <property type="evidence" value="ECO:0007669"/>
    <property type="project" value="InterPro"/>
</dbReference>
<dbReference type="CDD" id="cd07026">
    <property type="entry name" value="Ribosomal_L20"/>
    <property type="match status" value="1"/>
</dbReference>
<dbReference type="FunFam" id="1.10.1900.20:FF:000001">
    <property type="entry name" value="50S ribosomal protein L20"/>
    <property type="match status" value="1"/>
</dbReference>
<dbReference type="Gene3D" id="6.10.160.10">
    <property type="match status" value="1"/>
</dbReference>
<dbReference type="Gene3D" id="1.10.1900.20">
    <property type="entry name" value="Ribosomal protein L20"/>
    <property type="match status" value="1"/>
</dbReference>
<dbReference type="HAMAP" id="MF_00382">
    <property type="entry name" value="Ribosomal_bL20"/>
    <property type="match status" value="1"/>
</dbReference>
<dbReference type="InterPro" id="IPR005813">
    <property type="entry name" value="Ribosomal_bL20"/>
</dbReference>
<dbReference type="InterPro" id="IPR049946">
    <property type="entry name" value="RIBOSOMAL_L20_CS"/>
</dbReference>
<dbReference type="InterPro" id="IPR035566">
    <property type="entry name" value="Ribosomal_protein_bL20_C"/>
</dbReference>
<dbReference type="NCBIfam" id="TIGR01032">
    <property type="entry name" value="rplT_bact"/>
    <property type="match status" value="1"/>
</dbReference>
<dbReference type="PANTHER" id="PTHR10986">
    <property type="entry name" value="39S RIBOSOMAL PROTEIN L20"/>
    <property type="match status" value="1"/>
</dbReference>
<dbReference type="Pfam" id="PF00453">
    <property type="entry name" value="Ribosomal_L20"/>
    <property type="match status" value="1"/>
</dbReference>
<dbReference type="PRINTS" id="PR00062">
    <property type="entry name" value="RIBOSOMALL20"/>
</dbReference>
<dbReference type="SUPFAM" id="SSF74731">
    <property type="entry name" value="Ribosomal protein L20"/>
    <property type="match status" value="1"/>
</dbReference>
<dbReference type="PROSITE" id="PS00937">
    <property type="entry name" value="RIBOSOMAL_L20"/>
    <property type="match status" value="1"/>
</dbReference>
<comment type="function">
    <text evidence="1">Binds directly to 23S ribosomal RNA and is necessary for the in vitro assembly process of the 50S ribosomal subunit. It is not involved in the protein synthesizing functions of that subunit.</text>
</comment>
<comment type="similarity">
    <text evidence="1">Belongs to the bacterial ribosomal protein bL20 family.</text>
</comment>
<feature type="chain" id="PRO_1000048982" description="Large ribosomal subunit protein bL20">
    <location>
        <begin position="1"/>
        <end position="118"/>
    </location>
</feature>
<accession>Q0BL44</accession>
<evidence type="ECO:0000255" key="1">
    <source>
        <dbReference type="HAMAP-Rule" id="MF_00382"/>
    </source>
</evidence>
<evidence type="ECO:0000305" key="2"/>